<name>CRTAP_CHICK</name>
<accession>Q90830</accession>
<proteinExistence type="evidence at protein level"/>
<feature type="signal peptide" evidence="2">
    <location>
        <begin position="1"/>
        <end position="15"/>
    </location>
</feature>
<feature type="chain" id="PRO_0000006321" description="Cartilage-associated protein">
    <location>
        <begin position="16"/>
        <end position="271"/>
    </location>
</feature>
<feature type="glycosylation site" description="N-linked (GlcNAc...) asparagine" evidence="2">
    <location>
        <position position="76"/>
    </location>
</feature>
<keyword id="KW-0272">Extracellular matrix</keyword>
<keyword id="KW-0325">Glycoprotein</keyword>
<keyword id="KW-1185">Reference proteome</keyword>
<keyword id="KW-0964">Secreted</keyword>
<keyword id="KW-0732">Signal</keyword>
<comment type="function">
    <text evidence="1">Necessary for efficient 3-hydroxylation of fibrillar collagen prolyl residues.</text>
</comment>
<comment type="interaction">
    <interactant intactId="EBI-1169253">
        <id>Q90830</id>
    </interactant>
    <interactant intactId="EBI-1169258">
        <id>Q6JHU8</id>
        <label>P3H1</label>
    </interactant>
    <organismsDiffer>false</organismsDiffer>
    <experiments>3</experiments>
</comment>
<comment type="subcellular location">
    <subcellularLocation>
        <location>Secreted</location>
        <location>Extracellular space</location>
        <location>Extracellular matrix</location>
    </subcellularLocation>
</comment>
<comment type="tissue specificity">
    <text>Found in articular chondrocytes. Expressed in a variety of tissues.</text>
</comment>
<comment type="similarity">
    <text evidence="3">Belongs to the leprecan family.</text>
</comment>
<evidence type="ECO:0000250" key="1"/>
<evidence type="ECO:0000255" key="2"/>
<evidence type="ECO:0000305" key="3"/>
<dbReference type="EMBL" id="X97607">
    <property type="protein sequence ID" value="CAA66206.1"/>
    <property type="molecule type" value="mRNA"/>
</dbReference>
<dbReference type="RefSeq" id="NP_990431.1">
    <property type="nucleotide sequence ID" value="NM_205100.1"/>
</dbReference>
<dbReference type="SMR" id="Q90830"/>
<dbReference type="FunCoup" id="Q90830">
    <property type="interactions" value="157"/>
</dbReference>
<dbReference type="IntAct" id="Q90830">
    <property type="interactions" value="2"/>
</dbReference>
<dbReference type="STRING" id="9031.ENSGALP00000046912"/>
<dbReference type="GlyCosmos" id="Q90830">
    <property type="glycosylation" value="1 site, No reported glycans"/>
</dbReference>
<dbReference type="GlyGen" id="Q90830">
    <property type="glycosylation" value="1 site"/>
</dbReference>
<dbReference type="PaxDb" id="9031-ENSGALP00000036750"/>
<dbReference type="KEGG" id="gga:395992"/>
<dbReference type="VEuPathDB" id="HostDB:geneid_395992"/>
<dbReference type="eggNOG" id="KOG4459">
    <property type="taxonomic scope" value="Eukaryota"/>
</dbReference>
<dbReference type="InParanoid" id="Q90830"/>
<dbReference type="OrthoDB" id="8610171at2759"/>
<dbReference type="PRO" id="PR:Q90830"/>
<dbReference type="Proteomes" id="UP000000539">
    <property type="component" value="Unassembled WGS sequence"/>
</dbReference>
<dbReference type="GO" id="GO:0005783">
    <property type="term" value="C:endoplasmic reticulum"/>
    <property type="evidence" value="ECO:0000318"/>
    <property type="project" value="GO_Central"/>
</dbReference>
<dbReference type="GO" id="GO:0005576">
    <property type="term" value="C:extracellular region"/>
    <property type="evidence" value="ECO:0007669"/>
    <property type="project" value="UniProtKB-KW"/>
</dbReference>
<dbReference type="GO" id="GO:0032991">
    <property type="term" value="C:protein-containing complex"/>
    <property type="evidence" value="ECO:0000314"/>
    <property type="project" value="UniProtKB"/>
</dbReference>
<dbReference type="GO" id="GO:0061077">
    <property type="term" value="P:chaperone-mediated protein folding"/>
    <property type="evidence" value="ECO:0000314"/>
    <property type="project" value="UniProtKB"/>
</dbReference>
<dbReference type="GO" id="GO:0030199">
    <property type="term" value="P:collagen fibril organization"/>
    <property type="evidence" value="ECO:0000318"/>
    <property type="project" value="GO_Central"/>
</dbReference>
<dbReference type="GO" id="GO:1904027">
    <property type="term" value="P:negative regulation of collagen fibril organization"/>
    <property type="evidence" value="ECO:0000314"/>
    <property type="project" value="UniProtKB"/>
</dbReference>
<dbReference type="FunFam" id="1.25.40.10:FF:001533">
    <property type="entry name" value="Cartilage associated protein"/>
    <property type="match status" value="1"/>
</dbReference>
<dbReference type="Gene3D" id="1.25.40.10">
    <property type="entry name" value="Tetratricopeptide repeat domain"/>
    <property type="match status" value="1"/>
</dbReference>
<dbReference type="InterPro" id="IPR052284">
    <property type="entry name" value="Collagen_mod_leprecan"/>
</dbReference>
<dbReference type="InterPro" id="IPR056585">
    <property type="entry name" value="Leprecan_dom"/>
</dbReference>
<dbReference type="InterPro" id="IPR011990">
    <property type="entry name" value="TPR-like_helical_dom_sf"/>
</dbReference>
<dbReference type="PANTHER" id="PTHR13986:SF3">
    <property type="entry name" value="CARTILAGE-ASSOCIATED PROTEIN"/>
    <property type="match status" value="1"/>
</dbReference>
<dbReference type="PANTHER" id="PTHR13986">
    <property type="entry name" value="PROTEIN LYSINE HYDROXYLATION COMPLEX COMPONENT"/>
    <property type="match status" value="1"/>
</dbReference>
<dbReference type="Pfam" id="PF23557">
    <property type="entry name" value="TPR_leprecan"/>
    <property type="match status" value="1"/>
</dbReference>
<sequence length="271" mass="31494">MWRTLLAALLATAGAQYERYSFRSFPRDELMPLESAYRYGLDQYSTENWPESVSYLEVSMRLYRLLRDTEAFCHHNCSSAGPLTAPPPADGELAELRLLAGVLRRAQCLRRCKQGLPAFRQAQPGRELLEEFQRREPYKYLQFAYFKANNLPKAIAAAHTFLLKHPDDEMMQRNMAYYKSIPDAEEHIKDLETKPYENLFVRAVRAYNGDNWRTSISDMELALPDFFKTYDDCIAACEGSREIKDFKDFYLSIADHYIEVLACKVQFDITT</sequence>
<reference key="1">
    <citation type="journal article" date="1997" name="J. Cell Sci.">
        <title>Cartilage associated protein (CASP) is a novel developmentally regulated chick embryo protein.</title>
        <authorList>
            <person name="Castagnola P."/>
            <person name="Gennari M."/>
            <person name="Morello R."/>
            <person name="Tonachini L."/>
            <person name="Marin O."/>
            <person name="Gaggero A."/>
            <person name="Cancedda R."/>
        </authorList>
    </citation>
    <scope>NUCLEOTIDE SEQUENCE [MRNA]</scope>
</reference>
<gene>
    <name type="primary">CRTAP</name>
    <name type="synonym">CASP</name>
</gene>
<protein>
    <recommendedName>
        <fullName>Cartilage-associated protein</fullName>
    </recommendedName>
    <alternativeName>
        <fullName>Dualin</fullName>
    </alternativeName>
</protein>
<organism>
    <name type="scientific">Gallus gallus</name>
    <name type="common">Chicken</name>
    <dbReference type="NCBI Taxonomy" id="9031"/>
    <lineage>
        <taxon>Eukaryota</taxon>
        <taxon>Metazoa</taxon>
        <taxon>Chordata</taxon>
        <taxon>Craniata</taxon>
        <taxon>Vertebrata</taxon>
        <taxon>Euteleostomi</taxon>
        <taxon>Archelosauria</taxon>
        <taxon>Archosauria</taxon>
        <taxon>Dinosauria</taxon>
        <taxon>Saurischia</taxon>
        <taxon>Theropoda</taxon>
        <taxon>Coelurosauria</taxon>
        <taxon>Aves</taxon>
        <taxon>Neognathae</taxon>
        <taxon>Galloanserae</taxon>
        <taxon>Galliformes</taxon>
        <taxon>Phasianidae</taxon>
        <taxon>Phasianinae</taxon>
        <taxon>Gallus</taxon>
    </lineage>
</organism>